<organism>
    <name type="scientific">Oryza sativa subsp. japonica</name>
    <name type="common">Rice</name>
    <dbReference type="NCBI Taxonomy" id="39947"/>
    <lineage>
        <taxon>Eukaryota</taxon>
        <taxon>Viridiplantae</taxon>
        <taxon>Streptophyta</taxon>
        <taxon>Embryophyta</taxon>
        <taxon>Tracheophyta</taxon>
        <taxon>Spermatophyta</taxon>
        <taxon>Magnoliopsida</taxon>
        <taxon>Liliopsida</taxon>
        <taxon>Poales</taxon>
        <taxon>Poaceae</taxon>
        <taxon>BOP clade</taxon>
        <taxon>Oryzoideae</taxon>
        <taxon>Oryzeae</taxon>
        <taxon>Oryzinae</taxon>
        <taxon>Oryza</taxon>
        <taxon>Oryza sativa</taxon>
    </lineage>
</organism>
<proteinExistence type="evidence at transcript level"/>
<dbReference type="EMBL" id="AB114829">
    <property type="protein sequence ID" value="BAC79358.1"/>
    <property type="molecule type" value="mRNA"/>
</dbReference>
<dbReference type="EMBL" id="AP003627">
    <property type="protein sequence ID" value="BAB63833.1"/>
    <property type="molecule type" value="Genomic_DNA"/>
</dbReference>
<dbReference type="EMBL" id="AP008207">
    <property type="protein sequence ID" value="BAF07476.1"/>
    <property type="molecule type" value="Genomic_DNA"/>
</dbReference>
<dbReference type="EMBL" id="AP014957">
    <property type="protein sequence ID" value="BAS76466.1"/>
    <property type="molecule type" value="Genomic_DNA"/>
</dbReference>
<dbReference type="EMBL" id="CM000138">
    <property type="protein sequence ID" value="EAZ15017.1"/>
    <property type="molecule type" value="Genomic_DNA"/>
</dbReference>
<dbReference type="EMBL" id="AK111747">
    <property type="status" value="NOT_ANNOTATED_CDS"/>
    <property type="molecule type" value="mRNA"/>
</dbReference>
<dbReference type="EMBL" id="AK111768">
    <property type="protein sequence ID" value="BAG99409.1"/>
    <property type="molecule type" value="mRNA"/>
</dbReference>
<dbReference type="RefSeq" id="XP_015641156.1">
    <property type="nucleotide sequence ID" value="XM_015785670.1"/>
</dbReference>
<dbReference type="SMR" id="Q94CS9"/>
<dbReference type="FunCoup" id="Q94CS9">
    <property type="interactions" value="439"/>
</dbReference>
<dbReference type="STRING" id="39947.Q94CS9"/>
<dbReference type="PaxDb" id="39947-Q94CS9"/>
<dbReference type="EnsemblPlants" id="Os01t0975900-01">
    <property type="protein sequence ID" value="Os01t0975900-01"/>
    <property type="gene ID" value="Os01g0975900"/>
</dbReference>
<dbReference type="EnsemblPlants" id="Os01t0975900-02">
    <property type="protein sequence ID" value="Os01t0975900-02"/>
    <property type="gene ID" value="Os01g0975900"/>
</dbReference>
<dbReference type="Gramene" id="Os01t0975900-01">
    <property type="protein sequence ID" value="Os01t0975900-01"/>
    <property type="gene ID" value="Os01g0975900"/>
</dbReference>
<dbReference type="Gramene" id="Os01t0975900-02">
    <property type="protein sequence ID" value="Os01t0975900-02"/>
    <property type="gene ID" value="Os01g0975900"/>
</dbReference>
<dbReference type="KEGG" id="dosa:Os01g0975900"/>
<dbReference type="eggNOG" id="KOG0223">
    <property type="taxonomic scope" value="Eukaryota"/>
</dbReference>
<dbReference type="HOGENOM" id="CLU_020019_3_4_1"/>
<dbReference type="InParanoid" id="Q94CS9"/>
<dbReference type="OMA" id="IGQNTHE"/>
<dbReference type="OrthoDB" id="3222at2759"/>
<dbReference type="Proteomes" id="UP000000763">
    <property type="component" value="Chromosome 1"/>
</dbReference>
<dbReference type="Proteomes" id="UP000007752">
    <property type="component" value="Chromosome 1"/>
</dbReference>
<dbReference type="Proteomes" id="UP000059680">
    <property type="component" value="Chromosome 1"/>
</dbReference>
<dbReference type="GO" id="GO:0016020">
    <property type="term" value="C:membrane"/>
    <property type="evidence" value="ECO:0000318"/>
    <property type="project" value="GO_Central"/>
</dbReference>
<dbReference type="GO" id="GO:0005774">
    <property type="term" value="C:vacuolar membrane"/>
    <property type="evidence" value="ECO:0007669"/>
    <property type="project" value="UniProtKB-SubCell"/>
</dbReference>
<dbReference type="GO" id="GO:0015250">
    <property type="term" value="F:water channel activity"/>
    <property type="evidence" value="ECO:0000318"/>
    <property type="project" value="GO_Central"/>
</dbReference>
<dbReference type="GO" id="GO:0006833">
    <property type="term" value="P:water transport"/>
    <property type="evidence" value="ECO:0000318"/>
    <property type="project" value="GO_Central"/>
</dbReference>
<dbReference type="CDD" id="cd00333">
    <property type="entry name" value="MIP"/>
    <property type="match status" value="1"/>
</dbReference>
<dbReference type="FunFam" id="1.20.1080.10:FF:000002">
    <property type="entry name" value="Probable aquaporin TIP1-1"/>
    <property type="match status" value="1"/>
</dbReference>
<dbReference type="Gene3D" id="1.20.1080.10">
    <property type="entry name" value="Glycerol uptake facilitator protein"/>
    <property type="match status" value="1"/>
</dbReference>
<dbReference type="InterPro" id="IPR023271">
    <property type="entry name" value="Aquaporin-like"/>
</dbReference>
<dbReference type="InterPro" id="IPR034294">
    <property type="entry name" value="Aquaporin_transptr"/>
</dbReference>
<dbReference type="InterPro" id="IPR000425">
    <property type="entry name" value="MIP"/>
</dbReference>
<dbReference type="InterPro" id="IPR022357">
    <property type="entry name" value="MIP_CS"/>
</dbReference>
<dbReference type="PANTHER" id="PTHR45665:SF21">
    <property type="entry name" value="AQUAPORIN TIP1-3"/>
    <property type="match status" value="1"/>
</dbReference>
<dbReference type="PANTHER" id="PTHR45665">
    <property type="entry name" value="AQUAPORIN-8"/>
    <property type="match status" value="1"/>
</dbReference>
<dbReference type="Pfam" id="PF00230">
    <property type="entry name" value="MIP"/>
    <property type="match status" value="1"/>
</dbReference>
<dbReference type="PRINTS" id="PR00783">
    <property type="entry name" value="MINTRINSICP"/>
</dbReference>
<dbReference type="SUPFAM" id="SSF81338">
    <property type="entry name" value="Aquaporin-like"/>
    <property type="match status" value="1"/>
</dbReference>
<dbReference type="PROSITE" id="PS00221">
    <property type="entry name" value="MIP"/>
    <property type="match status" value="1"/>
</dbReference>
<evidence type="ECO:0000250" key="1"/>
<evidence type="ECO:0000255" key="2"/>
<evidence type="ECO:0000269" key="3">
    <source>
    </source>
</evidence>
<evidence type="ECO:0000305" key="4"/>
<gene>
    <name type="primary">TIP1-2</name>
    <name type="synonym">TIP1</name>
    <name type="ordered locus">Os01g0975900</name>
    <name type="ordered locus">LOC_Os01g74450</name>
    <name type="ORF">OsJ_004842</name>
    <name type="ORF">P0459B04.30</name>
</gene>
<reference key="1">
    <citation type="submission" date="2003-07" db="EMBL/GenBank/DDBJ databases">
        <title>Molecular characterization and expression analysis of tonoplast intrinsic protein isoforms from rice.</title>
        <authorList>
            <person name="Takahashi H."/>
            <person name="Morita S."/>
            <person name="Masumura T."/>
            <person name="Tanaka K."/>
        </authorList>
    </citation>
    <scope>NUCLEOTIDE SEQUENCE [MRNA]</scope>
    <source>
        <strain>cv. Nipponbare</strain>
    </source>
</reference>
<reference key="2">
    <citation type="journal article" date="2002" name="Nature">
        <title>The genome sequence and structure of rice chromosome 1.</title>
        <authorList>
            <person name="Sasaki T."/>
            <person name="Matsumoto T."/>
            <person name="Yamamoto K."/>
            <person name="Sakata K."/>
            <person name="Baba T."/>
            <person name="Katayose Y."/>
            <person name="Wu J."/>
            <person name="Niimura Y."/>
            <person name="Cheng Z."/>
            <person name="Nagamura Y."/>
            <person name="Antonio B.A."/>
            <person name="Kanamori H."/>
            <person name="Hosokawa S."/>
            <person name="Masukawa M."/>
            <person name="Arikawa K."/>
            <person name="Chiden Y."/>
            <person name="Hayashi M."/>
            <person name="Okamoto M."/>
            <person name="Ando T."/>
            <person name="Aoki H."/>
            <person name="Arita K."/>
            <person name="Hamada M."/>
            <person name="Harada C."/>
            <person name="Hijishita S."/>
            <person name="Honda M."/>
            <person name="Ichikawa Y."/>
            <person name="Idonuma A."/>
            <person name="Iijima M."/>
            <person name="Ikeda M."/>
            <person name="Ikeno M."/>
            <person name="Ito S."/>
            <person name="Ito T."/>
            <person name="Ito Y."/>
            <person name="Ito Y."/>
            <person name="Iwabuchi A."/>
            <person name="Kamiya K."/>
            <person name="Karasawa W."/>
            <person name="Katagiri S."/>
            <person name="Kikuta A."/>
            <person name="Kobayashi N."/>
            <person name="Kono I."/>
            <person name="Machita K."/>
            <person name="Maehara T."/>
            <person name="Mizuno H."/>
            <person name="Mizubayashi T."/>
            <person name="Mukai Y."/>
            <person name="Nagasaki H."/>
            <person name="Nakashima M."/>
            <person name="Nakama Y."/>
            <person name="Nakamichi Y."/>
            <person name="Nakamura M."/>
            <person name="Namiki N."/>
            <person name="Negishi M."/>
            <person name="Ohta I."/>
            <person name="Ono N."/>
            <person name="Saji S."/>
            <person name="Sakai K."/>
            <person name="Shibata M."/>
            <person name="Shimokawa T."/>
            <person name="Shomura A."/>
            <person name="Song J."/>
            <person name="Takazaki Y."/>
            <person name="Terasawa K."/>
            <person name="Tsuji K."/>
            <person name="Waki K."/>
            <person name="Yamagata H."/>
            <person name="Yamane H."/>
            <person name="Yoshiki S."/>
            <person name="Yoshihara R."/>
            <person name="Yukawa K."/>
            <person name="Zhong H."/>
            <person name="Iwama H."/>
            <person name="Endo T."/>
            <person name="Ito H."/>
            <person name="Hahn J.H."/>
            <person name="Kim H.-I."/>
            <person name="Eun M.-Y."/>
            <person name="Yano M."/>
            <person name="Jiang J."/>
            <person name="Gojobori T."/>
        </authorList>
    </citation>
    <scope>NUCLEOTIDE SEQUENCE [LARGE SCALE GENOMIC DNA]</scope>
    <source>
        <strain>cv. Nipponbare</strain>
    </source>
</reference>
<reference key="3">
    <citation type="journal article" date="2005" name="Nature">
        <title>The map-based sequence of the rice genome.</title>
        <authorList>
            <consortium name="International rice genome sequencing project (IRGSP)"/>
        </authorList>
    </citation>
    <scope>NUCLEOTIDE SEQUENCE [LARGE SCALE GENOMIC DNA]</scope>
    <source>
        <strain>cv. Nipponbare</strain>
    </source>
</reference>
<reference key="4">
    <citation type="journal article" date="2008" name="Nucleic Acids Res.">
        <title>The rice annotation project database (RAP-DB): 2008 update.</title>
        <authorList>
            <consortium name="The rice annotation project (RAP)"/>
        </authorList>
    </citation>
    <scope>GENOME REANNOTATION</scope>
    <source>
        <strain>cv. Nipponbare</strain>
    </source>
</reference>
<reference key="5">
    <citation type="journal article" date="2013" name="Rice">
        <title>Improvement of the Oryza sativa Nipponbare reference genome using next generation sequence and optical map data.</title>
        <authorList>
            <person name="Kawahara Y."/>
            <person name="de la Bastide M."/>
            <person name="Hamilton J.P."/>
            <person name="Kanamori H."/>
            <person name="McCombie W.R."/>
            <person name="Ouyang S."/>
            <person name="Schwartz D.C."/>
            <person name="Tanaka T."/>
            <person name="Wu J."/>
            <person name="Zhou S."/>
            <person name="Childs K.L."/>
            <person name="Davidson R.M."/>
            <person name="Lin H."/>
            <person name="Quesada-Ocampo L."/>
            <person name="Vaillancourt B."/>
            <person name="Sakai H."/>
            <person name="Lee S.S."/>
            <person name="Kim J."/>
            <person name="Numa H."/>
            <person name="Itoh T."/>
            <person name="Buell C.R."/>
            <person name="Matsumoto T."/>
        </authorList>
    </citation>
    <scope>GENOME REANNOTATION</scope>
    <source>
        <strain>cv. Nipponbare</strain>
    </source>
</reference>
<reference key="6">
    <citation type="journal article" date="2005" name="PLoS Biol.">
        <title>The genomes of Oryza sativa: a history of duplications.</title>
        <authorList>
            <person name="Yu J."/>
            <person name="Wang J."/>
            <person name="Lin W."/>
            <person name="Li S."/>
            <person name="Li H."/>
            <person name="Zhou J."/>
            <person name="Ni P."/>
            <person name="Dong W."/>
            <person name="Hu S."/>
            <person name="Zeng C."/>
            <person name="Zhang J."/>
            <person name="Zhang Y."/>
            <person name="Li R."/>
            <person name="Xu Z."/>
            <person name="Li S."/>
            <person name="Li X."/>
            <person name="Zheng H."/>
            <person name="Cong L."/>
            <person name="Lin L."/>
            <person name="Yin J."/>
            <person name="Geng J."/>
            <person name="Li G."/>
            <person name="Shi J."/>
            <person name="Liu J."/>
            <person name="Lv H."/>
            <person name="Li J."/>
            <person name="Wang J."/>
            <person name="Deng Y."/>
            <person name="Ran L."/>
            <person name="Shi X."/>
            <person name="Wang X."/>
            <person name="Wu Q."/>
            <person name="Li C."/>
            <person name="Ren X."/>
            <person name="Wang J."/>
            <person name="Wang X."/>
            <person name="Li D."/>
            <person name="Liu D."/>
            <person name="Zhang X."/>
            <person name="Ji Z."/>
            <person name="Zhao W."/>
            <person name="Sun Y."/>
            <person name="Zhang Z."/>
            <person name="Bao J."/>
            <person name="Han Y."/>
            <person name="Dong L."/>
            <person name="Ji J."/>
            <person name="Chen P."/>
            <person name="Wu S."/>
            <person name="Liu J."/>
            <person name="Xiao Y."/>
            <person name="Bu D."/>
            <person name="Tan J."/>
            <person name="Yang L."/>
            <person name="Ye C."/>
            <person name="Zhang J."/>
            <person name="Xu J."/>
            <person name="Zhou Y."/>
            <person name="Yu Y."/>
            <person name="Zhang B."/>
            <person name="Zhuang S."/>
            <person name="Wei H."/>
            <person name="Liu B."/>
            <person name="Lei M."/>
            <person name="Yu H."/>
            <person name="Li Y."/>
            <person name="Xu H."/>
            <person name="Wei S."/>
            <person name="He X."/>
            <person name="Fang L."/>
            <person name="Zhang Z."/>
            <person name="Zhang Y."/>
            <person name="Huang X."/>
            <person name="Su Z."/>
            <person name="Tong W."/>
            <person name="Li J."/>
            <person name="Tong Z."/>
            <person name="Li S."/>
            <person name="Ye J."/>
            <person name="Wang L."/>
            <person name="Fang L."/>
            <person name="Lei T."/>
            <person name="Chen C.-S."/>
            <person name="Chen H.-C."/>
            <person name="Xu Z."/>
            <person name="Li H."/>
            <person name="Huang H."/>
            <person name="Zhang F."/>
            <person name="Xu H."/>
            <person name="Li N."/>
            <person name="Zhao C."/>
            <person name="Li S."/>
            <person name="Dong L."/>
            <person name="Huang Y."/>
            <person name="Li L."/>
            <person name="Xi Y."/>
            <person name="Qi Q."/>
            <person name="Li W."/>
            <person name="Zhang B."/>
            <person name="Hu W."/>
            <person name="Zhang Y."/>
            <person name="Tian X."/>
            <person name="Jiao Y."/>
            <person name="Liang X."/>
            <person name="Jin J."/>
            <person name="Gao L."/>
            <person name="Zheng W."/>
            <person name="Hao B."/>
            <person name="Liu S.-M."/>
            <person name="Wang W."/>
            <person name="Yuan L."/>
            <person name="Cao M."/>
            <person name="McDermott J."/>
            <person name="Samudrala R."/>
            <person name="Wang J."/>
            <person name="Wong G.K.-S."/>
            <person name="Yang H."/>
        </authorList>
    </citation>
    <scope>NUCLEOTIDE SEQUENCE [LARGE SCALE GENOMIC DNA]</scope>
    <source>
        <strain>cv. Nipponbare</strain>
    </source>
</reference>
<reference key="7">
    <citation type="journal article" date="2003" name="Science">
        <title>Collection, mapping, and annotation of over 28,000 cDNA clones from japonica rice.</title>
        <authorList>
            <consortium name="The rice full-length cDNA consortium"/>
        </authorList>
    </citation>
    <scope>NUCLEOTIDE SEQUENCE [LARGE SCALE MRNA]</scope>
    <source>
        <strain>cv. Nipponbare</strain>
    </source>
</reference>
<reference key="8">
    <citation type="journal article" date="2005" name="Plant Cell Physiol.">
        <title>Identification of 33 rice aquaporin genes and analysis of their expression and function.</title>
        <authorList>
            <person name="Sakurai J."/>
            <person name="Ishikawa F."/>
            <person name="Yamaguchi T."/>
            <person name="Uemura M."/>
            <person name="Maeshima M."/>
        </authorList>
    </citation>
    <scope>NOMENCLATURE</scope>
    <scope>TISSUE SPECIFICITY</scope>
    <scope>INDUCTION</scope>
</reference>
<comment type="function">
    <text evidence="1">Aquaporins facilitate the transport of water and small neutral solutes across cell membranes. May be involved in transport from the vacuolar compartment to the cytoplasm (By similarity).</text>
</comment>
<comment type="subcellular location">
    <subcellularLocation>
        <location evidence="1">Vacuole membrane</location>
        <topology evidence="1">Multi-pass membrane protein</topology>
    </subcellularLocation>
    <text>Tonoplast.</text>
</comment>
<comment type="tissue specificity">
    <text evidence="3">Expressed in leaves.</text>
</comment>
<comment type="induction">
    <text evidence="3">Circadian-regulation. Expression is higher during the light phase than during the dark phase.</text>
</comment>
<comment type="domain">
    <text>Aquaporins contain two tandem repeats each containing three membrane-spanning domains and a pore-forming loop with the signature motif Asn-Pro-Ala (NPA).</text>
</comment>
<comment type="similarity">
    <text evidence="4">Belongs to the MIP/aquaporin (TC 1.A.8) family. TIP (TC 1.A.8.10) subfamily.</text>
</comment>
<feature type="chain" id="PRO_0000064022" description="Probable aquaporin TIP1-2">
    <location>
        <begin position="1"/>
        <end position="252"/>
    </location>
</feature>
<feature type="transmembrane region" description="Helical; Name=1" evidence="2">
    <location>
        <begin position="24"/>
        <end position="44"/>
    </location>
</feature>
<feature type="transmembrane region" description="Helical; Name=2" evidence="2">
    <location>
        <begin position="57"/>
        <end position="77"/>
    </location>
</feature>
<feature type="transmembrane region" description="Helical; Name=3" evidence="2">
    <location>
        <begin position="115"/>
        <end position="137"/>
    </location>
</feature>
<feature type="transmembrane region" description="Helical; Name=4" evidence="2">
    <location>
        <begin position="144"/>
        <end position="164"/>
    </location>
</feature>
<feature type="transmembrane region" description="Helical; Name=5" evidence="2">
    <location>
        <begin position="173"/>
        <end position="193"/>
    </location>
</feature>
<feature type="transmembrane region" description="Helical; Name=6" evidence="2">
    <location>
        <begin position="220"/>
        <end position="240"/>
    </location>
</feature>
<feature type="short sequence motif" description="NPA 1">
    <location>
        <begin position="85"/>
        <end position="87"/>
    </location>
</feature>
<feature type="short sequence motif" description="NPA 2">
    <location>
        <begin position="199"/>
        <end position="201"/>
    </location>
</feature>
<feature type="sequence conflict" description="In Ref. 7; AK111747." evidence="4" ref="7">
    <original>A</original>
    <variation>T</variation>
    <location>
        <position position="103"/>
    </location>
</feature>
<feature type="sequence conflict" description="In Ref. 6; EAZ15017." evidence="4" ref="6">
    <original>G</original>
    <variation>C</variation>
    <location>
        <position position="191"/>
    </location>
</feature>
<feature type="sequence conflict" description="In Ref. 6; EAZ15017." evidence="4" ref="6">
    <original>F</original>
    <variation>L</variation>
    <location>
        <position position="204"/>
    </location>
</feature>
<name>TIP12_ORYSJ</name>
<protein>
    <recommendedName>
        <fullName>Probable aquaporin TIP1-2</fullName>
    </recommendedName>
    <alternativeName>
        <fullName>Tonoplast intrinsic protein 1-2</fullName>
        <shortName>OsTIP1;2</shortName>
    </alternativeName>
</protein>
<sequence>MPVSRIAVGAPGELSHPDTAKAAVAEFISMLIFVFAGSGSGMAFSKLTDGGGTTPSGLIAASLAHALALFVAVAVGANISGGHVNPAVTFGAFVGGNISLVKAVVYWVAQLLGSVVACLLLKIATGGAAVGAFSLSAGVGAWNAVVFEIVMTFGLVYTVYATAVDPKKGDLGVIAPIAIGFIVGANILAGGAFDGASMNPAVSFGPAVVTGVWDNHWVYWLGPFVGAAIAALIYDIIFIGQRPHDQLPTADY</sequence>
<keyword id="KW-0472">Membrane</keyword>
<keyword id="KW-1185">Reference proteome</keyword>
<keyword id="KW-0677">Repeat</keyword>
<keyword id="KW-0812">Transmembrane</keyword>
<keyword id="KW-1133">Transmembrane helix</keyword>
<keyword id="KW-0813">Transport</keyword>
<keyword id="KW-0926">Vacuole</keyword>
<accession>Q94CS9</accession>
<accession>A3A220</accession>
<accession>B7F462</accession>
<accession>Q0JFK2</accession>
<accession>Q7XA62</accession>